<comment type="sequence caution" evidence="4">
    <conflict type="erroneous initiation">
        <sequence resource="EMBL-CDS" id="BAF04542"/>
    </conflict>
</comment>
<dbReference type="EC" id="3.6.4.-"/>
<dbReference type="EMBL" id="AP000570">
    <property type="protein sequence ID" value="BAE95808.1"/>
    <property type="molecule type" value="Genomic_DNA"/>
</dbReference>
<dbReference type="EMBL" id="AP008207">
    <property type="protein sequence ID" value="BAF04542.1"/>
    <property type="status" value="ALT_INIT"/>
    <property type="molecule type" value="Genomic_DNA"/>
</dbReference>
<dbReference type="EMBL" id="AP014957">
    <property type="protein sequence ID" value="BAS71395.1"/>
    <property type="molecule type" value="Genomic_DNA"/>
</dbReference>
<dbReference type="EMBL" id="AK100311">
    <property type="status" value="NOT_ANNOTATED_CDS"/>
    <property type="molecule type" value="mRNA"/>
</dbReference>
<dbReference type="RefSeq" id="XP_015623489.1">
    <property type="nucleotide sequence ID" value="XM_015768003.1"/>
</dbReference>
<dbReference type="SMR" id="Q1EHT7"/>
<dbReference type="FunCoup" id="Q1EHT7">
    <property type="interactions" value="669"/>
</dbReference>
<dbReference type="STRING" id="39947.Q1EHT7"/>
<dbReference type="PaxDb" id="39947-Q1EHT7"/>
<dbReference type="EnsemblPlants" id="Os01t0256800-01">
    <property type="protein sequence ID" value="Os01t0256800-01"/>
    <property type="gene ID" value="Os01g0256800"/>
</dbReference>
<dbReference type="Gramene" id="Os01t0256800-01">
    <property type="protein sequence ID" value="Os01t0256800-01"/>
    <property type="gene ID" value="Os01g0256800"/>
</dbReference>
<dbReference type="eggNOG" id="KOG0920">
    <property type="taxonomic scope" value="Eukaryota"/>
</dbReference>
<dbReference type="HOGENOM" id="CLU_007384_0_0_1"/>
<dbReference type="InParanoid" id="Q1EHT7"/>
<dbReference type="OMA" id="INPPMYL"/>
<dbReference type="OrthoDB" id="66977at2759"/>
<dbReference type="Proteomes" id="UP000000763">
    <property type="component" value="Chromosome 1"/>
</dbReference>
<dbReference type="Proteomes" id="UP000059680">
    <property type="component" value="Chromosome 1"/>
</dbReference>
<dbReference type="ExpressionAtlas" id="Q1EHT7">
    <property type="expression patterns" value="baseline and differential"/>
</dbReference>
<dbReference type="GO" id="GO:0005524">
    <property type="term" value="F:ATP binding"/>
    <property type="evidence" value="ECO:0007669"/>
    <property type="project" value="UniProtKB-KW"/>
</dbReference>
<dbReference type="GO" id="GO:0016887">
    <property type="term" value="F:ATP hydrolysis activity"/>
    <property type="evidence" value="ECO:0007669"/>
    <property type="project" value="InterPro"/>
</dbReference>
<dbReference type="GO" id="GO:0003677">
    <property type="term" value="F:DNA binding"/>
    <property type="evidence" value="ECO:0007669"/>
    <property type="project" value="UniProtKB-KW"/>
</dbReference>
<dbReference type="GO" id="GO:0004386">
    <property type="term" value="F:helicase activity"/>
    <property type="evidence" value="ECO:0000318"/>
    <property type="project" value="GO_Central"/>
</dbReference>
<dbReference type="GO" id="GO:0003729">
    <property type="term" value="F:mRNA binding"/>
    <property type="evidence" value="ECO:0007669"/>
    <property type="project" value="EnsemblPlants"/>
</dbReference>
<dbReference type="GO" id="GO:0003723">
    <property type="term" value="F:RNA binding"/>
    <property type="evidence" value="ECO:0000318"/>
    <property type="project" value="GO_Central"/>
</dbReference>
<dbReference type="GO" id="GO:0008270">
    <property type="term" value="F:zinc ion binding"/>
    <property type="evidence" value="ECO:0007669"/>
    <property type="project" value="UniProtKB-KW"/>
</dbReference>
<dbReference type="CDD" id="cd17917">
    <property type="entry name" value="DEXHc_RHA-like"/>
    <property type="match status" value="1"/>
</dbReference>
<dbReference type="CDD" id="cd18791">
    <property type="entry name" value="SF2_C_RHA"/>
    <property type="match status" value="1"/>
</dbReference>
<dbReference type="FunFam" id="4.10.1000.10:FF:000039">
    <property type="entry name" value="Putative RNA helicase family protein"/>
    <property type="match status" value="1"/>
</dbReference>
<dbReference type="FunFam" id="3.40.50.300:FF:001290">
    <property type="entry name" value="Zinc finger helicase family protein"/>
    <property type="match status" value="1"/>
</dbReference>
<dbReference type="FunFam" id="3.40.50.300:FF:001477">
    <property type="entry name" value="Zinc finger helicase family protein"/>
    <property type="match status" value="1"/>
</dbReference>
<dbReference type="Gene3D" id="3.40.50.300">
    <property type="entry name" value="P-loop containing nucleotide triphosphate hydrolases"/>
    <property type="match status" value="2"/>
</dbReference>
<dbReference type="Gene3D" id="4.10.1000.10">
    <property type="entry name" value="Zinc finger, CCCH-type"/>
    <property type="match status" value="1"/>
</dbReference>
<dbReference type="InterPro" id="IPR003593">
    <property type="entry name" value="AAA+_ATPase"/>
</dbReference>
<dbReference type="InterPro" id="IPR011545">
    <property type="entry name" value="DEAD/DEAH_box_helicase_dom"/>
</dbReference>
<dbReference type="InterPro" id="IPR014001">
    <property type="entry name" value="Helicase_ATP-bd"/>
</dbReference>
<dbReference type="InterPro" id="IPR001650">
    <property type="entry name" value="Helicase_C-like"/>
</dbReference>
<dbReference type="InterPro" id="IPR027417">
    <property type="entry name" value="P-loop_NTPase"/>
</dbReference>
<dbReference type="InterPro" id="IPR041367">
    <property type="entry name" value="Znf-CCCH_4"/>
</dbReference>
<dbReference type="InterPro" id="IPR000571">
    <property type="entry name" value="Znf_CCCH"/>
</dbReference>
<dbReference type="InterPro" id="IPR036855">
    <property type="entry name" value="Znf_CCCH_sf"/>
</dbReference>
<dbReference type="PANTHER" id="PTHR18934">
    <property type="entry name" value="ATP-DEPENDENT RNA HELICASE"/>
    <property type="match status" value="1"/>
</dbReference>
<dbReference type="PANTHER" id="PTHR18934:SF221">
    <property type="entry name" value="ATP-DEPENDENT RNA HELICASE DHX34-RELATED"/>
    <property type="match status" value="1"/>
</dbReference>
<dbReference type="Pfam" id="PF00270">
    <property type="entry name" value="DEAD"/>
    <property type="match status" value="1"/>
</dbReference>
<dbReference type="Pfam" id="PF00271">
    <property type="entry name" value="Helicase_C"/>
    <property type="match status" value="1"/>
</dbReference>
<dbReference type="Pfam" id="PF18044">
    <property type="entry name" value="zf-CCCH_4"/>
    <property type="match status" value="1"/>
</dbReference>
<dbReference type="SMART" id="SM00382">
    <property type="entry name" value="AAA"/>
    <property type="match status" value="1"/>
</dbReference>
<dbReference type="SMART" id="SM00487">
    <property type="entry name" value="DEXDc"/>
    <property type="match status" value="1"/>
</dbReference>
<dbReference type="SMART" id="SM00490">
    <property type="entry name" value="HELICc"/>
    <property type="match status" value="1"/>
</dbReference>
<dbReference type="SMART" id="SM00356">
    <property type="entry name" value="ZnF_C3H1"/>
    <property type="match status" value="2"/>
</dbReference>
<dbReference type="SUPFAM" id="SSF90229">
    <property type="entry name" value="CCCH zinc finger"/>
    <property type="match status" value="2"/>
</dbReference>
<dbReference type="SUPFAM" id="SSF52540">
    <property type="entry name" value="P-loop containing nucleoside triphosphate hydrolases"/>
    <property type="match status" value="1"/>
</dbReference>
<dbReference type="PROSITE" id="PS51192">
    <property type="entry name" value="HELICASE_ATP_BIND_1"/>
    <property type="match status" value="1"/>
</dbReference>
<dbReference type="PROSITE" id="PS51194">
    <property type="entry name" value="HELICASE_CTER"/>
    <property type="match status" value="1"/>
</dbReference>
<dbReference type="PROSITE" id="PS50103">
    <property type="entry name" value="ZF_C3H1"/>
    <property type="match status" value="2"/>
</dbReference>
<protein>
    <recommendedName>
        <fullName>Zinc finger CCCH domain-containing protein 4</fullName>
        <shortName>OsC3H4</shortName>
        <ecNumber>3.6.4.-</ecNumber>
    </recommendedName>
</protein>
<evidence type="ECO:0000255" key="1">
    <source>
        <dbReference type="PROSITE-ProRule" id="PRU00541"/>
    </source>
</evidence>
<evidence type="ECO:0000255" key="2">
    <source>
        <dbReference type="PROSITE-ProRule" id="PRU00542"/>
    </source>
</evidence>
<evidence type="ECO:0000255" key="3">
    <source>
        <dbReference type="PROSITE-ProRule" id="PRU00723"/>
    </source>
</evidence>
<evidence type="ECO:0000305" key="4"/>
<accession>Q1EHT7</accession>
<accession>A0A0P0V0I9</accession>
<accession>Q0JNY6</accession>
<organism>
    <name type="scientific">Oryza sativa subsp. japonica</name>
    <name type="common">Rice</name>
    <dbReference type="NCBI Taxonomy" id="39947"/>
    <lineage>
        <taxon>Eukaryota</taxon>
        <taxon>Viridiplantae</taxon>
        <taxon>Streptophyta</taxon>
        <taxon>Embryophyta</taxon>
        <taxon>Tracheophyta</taxon>
        <taxon>Spermatophyta</taxon>
        <taxon>Magnoliopsida</taxon>
        <taxon>Liliopsida</taxon>
        <taxon>Poales</taxon>
        <taxon>Poaceae</taxon>
        <taxon>BOP clade</taxon>
        <taxon>Oryzoideae</taxon>
        <taxon>Oryzeae</taxon>
        <taxon>Oryzinae</taxon>
        <taxon>Oryza</taxon>
        <taxon>Oryza sativa</taxon>
    </lineage>
</organism>
<proteinExistence type="evidence at transcript level"/>
<feature type="chain" id="PRO_0000346803" description="Zinc finger CCCH domain-containing protein 4">
    <location>
        <begin position="1"/>
        <end position="1007"/>
    </location>
</feature>
<feature type="domain" description="Helicase ATP-binding" evidence="1">
    <location>
        <begin position="28"/>
        <end position="192"/>
    </location>
</feature>
<feature type="domain" description="Helicase C-terminal" evidence="2">
    <location>
        <begin position="250"/>
        <end position="420"/>
    </location>
</feature>
<feature type="zinc finger region" description="C3H1-type 1" evidence="3">
    <location>
        <begin position="723"/>
        <end position="750"/>
    </location>
</feature>
<feature type="zinc finger region" description="C3H1-type 2" evidence="3">
    <location>
        <begin position="751"/>
        <end position="778"/>
    </location>
</feature>
<feature type="short sequence motif" description="DEAH box">
    <location>
        <begin position="139"/>
        <end position="142"/>
    </location>
</feature>
<feature type="binding site" evidence="1">
    <location>
        <begin position="41"/>
        <end position="48"/>
    </location>
    <ligand>
        <name>ATP</name>
        <dbReference type="ChEBI" id="CHEBI:30616"/>
    </ligand>
</feature>
<feature type="sequence conflict" description="In Ref. 5; AK100311." evidence="4" ref="5">
    <original>E</original>
    <variation>V</variation>
    <location>
        <position position="727"/>
    </location>
</feature>
<name>C3H4_ORYSJ</name>
<reference key="1">
    <citation type="journal article" date="2002" name="Nature">
        <title>The genome sequence and structure of rice chromosome 1.</title>
        <authorList>
            <person name="Sasaki T."/>
            <person name="Matsumoto T."/>
            <person name="Yamamoto K."/>
            <person name="Sakata K."/>
            <person name="Baba T."/>
            <person name="Katayose Y."/>
            <person name="Wu J."/>
            <person name="Niimura Y."/>
            <person name="Cheng Z."/>
            <person name="Nagamura Y."/>
            <person name="Antonio B.A."/>
            <person name="Kanamori H."/>
            <person name="Hosokawa S."/>
            <person name="Masukawa M."/>
            <person name="Arikawa K."/>
            <person name="Chiden Y."/>
            <person name="Hayashi M."/>
            <person name="Okamoto M."/>
            <person name="Ando T."/>
            <person name="Aoki H."/>
            <person name="Arita K."/>
            <person name="Hamada M."/>
            <person name="Harada C."/>
            <person name="Hijishita S."/>
            <person name="Honda M."/>
            <person name="Ichikawa Y."/>
            <person name="Idonuma A."/>
            <person name="Iijima M."/>
            <person name="Ikeda M."/>
            <person name="Ikeno M."/>
            <person name="Ito S."/>
            <person name="Ito T."/>
            <person name="Ito Y."/>
            <person name="Ito Y."/>
            <person name="Iwabuchi A."/>
            <person name="Kamiya K."/>
            <person name="Karasawa W."/>
            <person name="Katagiri S."/>
            <person name="Kikuta A."/>
            <person name="Kobayashi N."/>
            <person name="Kono I."/>
            <person name="Machita K."/>
            <person name="Maehara T."/>
            <person name="Mizuno H."/>
            <person name="Mizubayashi T."/>
            <person name="Mukai Y."/>
            <person name="Nagasaki H."/>
            <person name="Nakashima M."/>
            <person name="Nakama Y."/>
            <person name="Nakamichi Y."/>
            <person name="Nakamura M."/>
            <person name="Namiki N."/>
            <person name="Negishi M."/>
            <person name="Ohta I."/>
            <person name="Ono N."/>
            <person name="Saji S."/>
            <person name="Sakai K."/>
            <person name="Shibata M."/>
            <person name="Shimokawa T."/>
            <person name="Shomura A."/>
            <person name="Song J."/>
            <person name="Takazaki Y."/>
            <person name="Terasawa K."/>
            <person name="Tsuji K."/>
            <person name="Waki K."/>
            <person name="Yamagata H."/>
            <person name="Yamane H."/>
            <person name="Yoshiki S."/>
            <person name="Yoshihara R."/>
            <person name="Yukawa K."/>
            <person name="Zhong H."/>
            <person name="Iwama H."/>
            <person name="Endo T."/>
            <person name="Ito H."/>
            <person name="Hahn J.H."/>
            <person name="Kim H.-I."/>
            <person name="Eun M.-Y."/>
            <person name="Yano M."/>
            <person name="Jiang J."/>
            <person name="Gojobori T."/>
        </authorList>
    </citation>
    <scope>NUCLEOTIDE SEQUENCE [LARGE SCALE GENOMIC DNA]</scope>
    <source>
        <strain>cv. Nipponbare</strain>
    </source>
</reference>
<reference key="2">
    <citation type="journal article" date="2005" name="Nature">
        <title>The map-based sequence of the rice genome.</title>
        <authorList>
            <consortium name="International rice genome sequencing project (IRGSP)"/>
        </authorList>
    </citation>
    <scope>NUCLEOTIDE SEQUENCE [LARGE SCALE GENOMIC DNA]</scope>
    <source>
        <strain>cv. Nipponbare</strain>
    </source>
</reference>
<reference key="3">
    <citation type="journal article" date="2008" name="Nucleic Acids Res.">
        <title>The rice annotation project database (RAP-DB): 2008 update.</title>
        <authorList>
            <consortium name="The rice annotation project (RAP)"/>
        </authorList>
    </citation>
    <scope>GENOME REANNOTATION</scope>
    <source>
        <strain>cv. Nipponbare</strain>
    </source>
</reference>
<reference key="4">
    <citation type="journal article" date="2013" name="Rice">
        <title>Improvement of the Oryza sativa Nipponbare reference genome using next generation sequence and optical map data.</title>
        <authorList>
            <person name="Kawahara Y."/>
            <person name="de la Bastide M."/>
            <person name="Hamilton J.P."/>
            <person name="Kanamori H."/>
            <person name="McCombie W.R."/>
            <person name="Ouyang S."/>
            <person name="Schwartz D.C."/>
            <person name="Tanaka T."/>
            <person name="Wu J."/>
            <person name="Zhou S."/>
            <person name="Childs K.L."/>
            <person name="Davidson R.M."/>
            <person name="Lin H."/>
            <person name="Quesada-Ocampo L."/>
            <person name="Vaillancourt B."/>
            <person name="Sakai H."/>
            <person name="Lee S.S."/>
            <person name="Kim J."/>
            <person name="Numa H."/>
            <person name="Itoh T."/>
            <person name="Buell C.R."/>
            <person name="Matsumoto T."/>
        </authorList>
    </citation>
    <scope>GENOME REANNOTATION</scope>
    <source>
        <strain>cv. Nipponbare</strain>
    </source>
</reference>
<reference key="5">
    <citation type="journal article" date="2003" name="Science">
        <title>Collection, mapping, and annotation of over 28,000 cDNA clones from japonica rice.</title>
        <authorList>
            <consortium name="The rice full-length cDNA consortium"/>
        </authorList>
    </citation>
    <scope>NUCLEOTIDE SEQUENCE [LARGE SCALE MRNA]</scope>
    <source>
        <strain>cv. Nipponbare</strain>
    </source>
</reference>
<reference key="6">
    <citation type="journal article" date="2008" name="BMC Genomics">
        <title>Genome-wide analysis of CCCH zinc finger family in Arabidopsis and rice.</title>
        <authorList>
            <person name="Wang D."/>
            <person name="Guo Y."/>
            <person name="Wu C."/>
            <person name="Yang G."/>
            <person name="Li Y."/>
            <person name="Zheng C."/>
        </authorList>
    </citation>
    <scope>NOMENCLATURE</scope>
</reference>
<keyword id="KW-0067">ATP-binding</keyword>
<keyword id="KW-0238">DNA-binding</keyword>
<keyword id="KW-0347">Helicase</keyword>
<keyword id="KW-0378">Hydrolase</keyword>
<keyword id="KW-0479">Metal-binding</keyword>
<keyword id="KW-0547">Nucleotide-binding</keyword>
<keyword id="KW-1185">Reference proteome</keyword>
<keyword id="KW-0677">Repeat</keyword>
<keyword id="KW-0862">Zinc</keyword>
<keyword id="KW-0863">Zinc-finger</keyword>
<sequence>MAEAEEKRVGVGEARAPLAVEALRGKIVEKVKGNRVTLIVGDTGCGKSSMVPQFLLEENMEPILCTQPRRFAVVAIAQMIAESRNCQVGEEVGYHIGHSNVSNLNSKRSRIVFKTAGVVLEQMRDKGIAALNYKVIILDEIHERSVESDLVLACVKQFMMKKNDLRLILMSATADITRYKDYFRDLGRGERVEVIAIPSSPRSSIFQRKVLYLEQIVDILKMDSESLSTKYCSGPNTAADAGLKPDVYELIHRLLLHIHQNEPDIGKSILVFLPTYYALEQQWIRLLSASSMFKVHILHRSIDTDEALQTMKVSKSCRKVILATNIAESSVTIPGVAYVIDSCRSLQVYWDPIRKTDSAELVWVSKSQAEQRKGRTGRTCDGQIYRLVTGPFYNSLTDHEYPAILRLSLREQVLMICCAESRAMNDPHVLLQKVLDPPDSDVVEDALESLVQIRALDKPTSPRGRHEPTFYGCLLNSLPLSFDASVLALKFGDTGSICEGILISIMLDIQPLPIVQPFGHQQLCKMYRNNYFEEEGIDLQTGKKEAALVGNLCAFQFWQRMFKDKYRLDCLINVVNTHEPKASNGFVAKPEDEWCAFHNLVPTALNYISEIYDDIMGTLHRFRPSFLVKINPPMYLQPSEFHHMCLRHEVLELENVNSLPLEAENSHLDSHRRCAATPYVSPADFGTTTVVKTLKTLIKEMKTQSAADRVTYRELVHGYVQPALENEMCVFFLNGSCNRGDTCHFSHSSRAPRPICKFFLTLQGCRNGNSCSFSHDSGSLVSSSITSGICSQENRATSVCCKRLLPAAGDGHILVMNDKSLQFACKLCNYYDPTKIIACTPGPHSFESDSVTKGLKILQNLADPSYLFIGGEHKLSVPWTKLSRVFWFADIDSNESISEQVVLQKFFQHIAIKTLSEKMSDLQVIVIMNNAKFVQLQVERLARECFLFLGESFMFDEATLGWFSDTPNYPRGMQVSAPVAYIFSMHPPTGIQFGDYASELRKVLYSN</sequence>
<gene>
    <name type="ordered locus">Os01g0256800</name>
    <name type="ordered locus">LOC_Os01g15300</name>
    <name type="ORF">P0711E10.43</name>
</gene>